<reference key="1">
    <citation type="journal article" date="2010" name="Genome Biol. Evol.">
        <title>Continuing evolution of Burkholderia mallei through genome reduction and large-scale rearrangements.</title>
        <authorList>
            <person name="Losada L."/>
            <person name="Ronning C.M."/>
            <person name="DeShazer D."/>
            <person name="Woods D."/>
            <person name="Fedorova N."/>
            <person name="Kim H.S."/>
            <person name="Shabalina S.A."/>
            <person name="Pearson T.R."/>
            <person name="Brinkac L."/>
            <person name="Tan P."/>
            <person name="Nandi T."/>
            <person name="Crabtree J."/>
            <person name="Badger J."/>
            <person name="Beckstrom-Sternberg S."/>
            <person name="Saqib M."/>
            <person name="Schutzer S.E."/>
            <person name="Keim P."/>
            <person name="Nierman W.C."/>
        </authorList>
    </citation>
    <scope>NUCLEOTIDE SEQUENCE [LARGE SCALE GENOMIC DNA]</scope>
    <source>
        <strain>668</strain>
    </source>
</reference>
<feature type="chain" id="PRO_1000052550" description="Large ribosomal subunit protein uL22">
    <location>
        <begin position="1"/>
        <end position="109"/>
    </location>
</feature>
<name>RL22_BURP6</name>
<gene>
    <name evidence="1" type="primary">rplV</name>
    <name type="ordered locus">BURPS668_3741</name>
</gene>
<proteinExistence type="inferred from homology"/>
<evidence type="ECO:0000255" key="1">
    <source>
        <dbReference type="HAMAP-Rule" id="MF_01331"/>
    </source>
</evidence>
<evidence type="ECO:0000305" key="2"/>
<organism>
    <name type="scientific">Burkholderia pseudomallei (strain 668)</name>
    <dbReference type="NCBI Taxonomy" id="320373"/>
    <lineage>
        <taxon>Bacteria</taxon>
        <taxon>Pseudomonadati</taxon>
        <taxon>Pseudomonadota</taxon>
        <taxon>Betaproteobacteria</taxon>
        <taxon>Burkholderiales</taxon>
        <taxon>Burkholderiaceae</taxon>
        <taxon>Burkholderia</taxon>
        <taxon>pseudomallei group</taxon>
    </lineage>
</organism>
<dbReference type="EMBL" id="CP000570">
    <property type="protein sequence ID" value="ABN83212.1"/>
    <property type="molecule type" value="Genomic_DNA"/>
</dbReference>
<dbReference type="RefSeq" id="WP_004199272.1">
    <property type="nucleotide sequence ID" value="NC_009074.1"/>
</dbReference>
<dbReference type="SMR" id="A3NEH4"/>
<dbReference type="GeneID" id="98107155"/>
<dbReference type="KEGG" id="bpd:BURPS668_3741"/>
<dbReference type="HOGENOM" id="CLU_083987_3_3_4"/>
<dbReference type="GO" id="GO:0022625">
    <property type="term" value="C:cytosolic large ribosomal subunit"/>
    <property type="evidence" value="ECO:0007669"/>
    <property type="project" value="TreeGrafter"/>
</dbReference>
<dbReference type="GO" id="GO:0019843">
    <property type="term" value="F:rRNA binding"/>
    <property type="evidence" value="ECO:0007669"/>
    <property type="project" value="UniProtKB-UniRule"/>
</dbReference>
<dbReference type="GO" id="GO:0003735">
    <property type="term" value="F:structural constituent of ribosome"/>
    <property type="evidence" value="ECO:0007669"/>
    <property type="project" value="InterPro"/>
</dbReference>
<dbReference type="GO" id="GO:0006412">
    <property type="term" value="P:translation"/>
    <property type="evidence" value="ECO:0007669"/>
    <property type="project" value="UniProtKB-UniRule"/>
</dbReference>
<dbReference type="CDD" id="cd00336">
    <property type="entry name" value="Ribosomal_L22"/>
    <property type="match status" value="1"/>
</dbReference>
<dbReference type="FunFam" id="3.90.470.10:FF:000001">
    <property type="entry name" value="50S ribosomal protein L22"/>
    <property type="match status" value="1"/>
</dbReference>
<dbReference type="Gene3D" id="3.90.470.10">
    <property type="entry name" value="Ribosomal protein L22/L17"/>
    <property type="match status" value="1"/>
</dbReference>
<dbReference type="HAMAP" id="MF_01331_B">
    <property type="entry name" value="Ribosomal_uL22_B"/>
    <property type="match status" value="1"/>
</dbReference>
<dbReference type="InterPro" id="IPR001063">
    <property type="entry name" value="Ribosomal_uL22"/>
</dbReference>
<dbReference type="InterPro" id="IPR005727">
    <property type="entry name" value="Ribosomal_uL22_bac/chlpt-type"/>
</dbReference>
<dbReference type="InterPro" id="IPR047867">
    <property type="entry name" value="Ribosomal_uL22_bac/org-type"/>
</dbReference>
<dbReference type="InterPro" id="IPR018260">
    <property type="entry name" value="Ribosomal_uL22_CS"/>
</dbReference>
<dbReference type="InterPro" id="IPR036394">
    <property type="entry name" value="Ribosomal_uL22_sf"/>
</dbReference>
<dbReference type="NCBIfam" id="TIGR01044">
    <property type="entry name" value="rplV_bact"/>
    <property type="match status" value="1"/>
</dbReference>
<dbReference type="PANTHER" id="PTHR13501">
    <property type="entry name" value="CHLOROPLAST 50S RIBOSOMAL PROTEIN L22-RELATED"/>
    <property type="match status" value="1"/>
</dbReference>
<dbReference type="PANTHER" id="PTHR13501:SF8">
    <property type="entry name" value="LARGE RIBOSOMAL SUBUNIT PROTEIN UL22M"/>
    <property type="match status" value="1"/>
</dbReference>
<dbReference type="Pfam" id="PF00237">
    <property type="entry name" value="Ribosomal_L22"/>
    <property type="match status" value="1"/>
</dbReference>
<dbReference type="SUPFAM" id="SSF54843">
    <property type="entry name" value="Ribosomal protein L22"/>
    <property type="match status" value="1"/>
</dbReference>
<dbReference type="PROSITE" id="PS00464">
    <property type="entry name" value="RIBOSOMAL_L22"/>
    <property type="match status" value="1"/>
</dbReference>
<keyword id="KW-0687">Ribonucleoprotein</keyword>
<keyword id="KW-0689">Ribosomal protein</keyword>
<keyword id="KW-0694">RNA-binding</keyword>
<keyword id="KW-0699">rRNA-binding</keyword>
<accession>A3NEH4</accession>
<protein>
    <recommendedName>
        <fullName evidence="1">Large ribosomal subunit protein uL22</fullName>
    </recommendedName>
    <alternativeName>
        <fullName evidence="2">50S ribosomal protein L22</fullName>
    </alternativeName>
</protein>
<sequence>MEVKAIHRGARISAQKTRLVADQIRGLPVDKALNVLTFSPKKAAGIVKKVVLSAIANAEHNEGADIDELKIKSIYVDKAASLKRFTARAKGRGNRIEKQSCHITVTVGN</sequence>
<comment type="function">
    <text evidence="1">This protein binds specifically to 23S rRNA; its binding is stimulated by other ribosomal proteins, e.g. L4, L17, and L20. It is important during the early stages of 50S assembly. It makes multiple contacts with different domains of the 23S rRNA in the assembled 50S subunit and ribosome (By similarity).</text>
</comment>
<comment type="function">
    <text evidence="1">The globular domain of the protein is located near the polypeptide exit tunnel on the outside of the subunit, while an extended beta-hairpin is found that lines the wall of the exit tunnel in the center of the 70S ribosome.</text>
</comment>
<comment type="subunit">
    <text evidence="1">Part of the 50S ribosomal subunit.</text>
</comment>
<comment type="similarity">
    <text evidence="1">Belongs to the universal ribosomal protein uL22 family.</text>
</comment>